<evidence type="ECO:0000250" key="1"/>
<evidence type="ECO:0000255" key="2">
    <source>
        <dbReference type="HAMAP-Rule" id="MF_00265"/>
    </source>
</evidence>
<evidence type="ECO:0000269" key="3">
    <source>
    </source>
</evidence>
<gene>
    <name evidence="2" type="primary">vapC29</name>
    <name type="ordered locus">Rv0617</name>
</gene>
<sequence>MTVLLDANVLIALVVAEHVHHDAAADWLMASDTGFATCPMTQGSLVRFLVRSGQSAAAARDVVSAVQCTSRHEFWPDALSFAGVEVAGVVGHRQVTDAYLAQLARSHDGQLATLDSGLAHLHGDVAVLIPTTT</sequence>
<name>VPC29_MYCTU</name>
<proteinExistence type="evidence at protein level"/>
<comment type="function">
    <text evidence="1 3">Toxic component of a type II toxin-antitoxin (TA) system. Its cognate antitoxin is VapB29 (By similarity). Has ribonuclease activity.</text>
</comment>
<comment type="cofactor">
    <cofactor evidence="2 3">
        <name>Mg(2+)</name>
        <dbReference type="ChEBI" id="CHEBI:18420"/>
    </cofactor>
</comment>
<comment type="activity regulation">
    <text evidence="3">Inhibited by EDTA.</text>
</comment>
<comment type="similarity">
    <text evidence="2">Belongs to the PINc/VapC protein family.</text>
</comment>
<protein>
    <recommendedName>
        <fullName evidence="2">Ribonuclease VapC29</fullName>
        <shortName evidence="2">RNase VapC29</shortName>
        <ecNumber evidence="2">3.1.-.-</ecNumber>
    </recommendedName>
    <alternativeName>
        <fullName evidence="2">Toxin VapC29</fullName>
    </alternativeName>
</protein>
<organism>
    <name type="scientific">Mycobacterium tuberculosis (strain ATCC 25618 / H37Rv)</name>
    <dbReference type="NCBI Taxonomy" id="83332"/>
    <lineage>
        <taxon>Bacteria</taxon>
        <taxon>Bacillati</taxon>
        <taxon>Actinomycetota</taxon>
        <taxon>Actinomycetes</taxon>
        <taxon>Mycobacteriales</taxon>
        <taxon>Mycobacteriaceae</taxon>
        <taxon>Mycobacterium</taxon>
        <taxon>Mycobacterium tuberculosis complex</taxon>
    </lineage>
</organism>
<accession>P9WF79</accession>
<accession>L0T729</accession>
<accession>O07760</accession>
<accession>Q7D9I9</accession>
<keyword id="KW-0378">Hydrolase</keyword>
<keyword id="KW-0460">Magnesium</keyword>
<keyword id="KW-0479">Metal-binding</keyword>
<keyword id="KW-0540">Nuclease</keyword>
<keyword id="KW-1185">Reference proteome</keyword>
<keyword id="KW-1277">Toxin-antitoxin system</keyword>
<reference key="1">
    <citation type="journal article" date="1998" name="Nature">
        <title>Deciphering the biology of Mycobacterium tuberculosis from the complete genome sequence.</title>
        <authorList>
            <person name="Cole S.T."/>
            <person name="Brosch R."/>
            <person name="Parkhill J."/>
            <person name="Garnier T."/>
            <person name="Churcher C.M."/>
            <person name="Harris D.E."/>
            <person name="Gordon S.V."/>
            <person name="Eiglmeier K."/>
            <person name="Gas S."/>
            <person name="Barry C.E. III"/>
            <person name="Tekaia F."/>
            <person name="Badcock K."/>
            <person name="Basham D."/>
            <person name="Brown D."/>
            <person name="Chillingworth T."/>
            <person name="Connor R."/>
            <person name="Davies R.M."/>
            <person name="Devlin K."/>
            <person name="Feltwell T."/>
            <person name="Gentles S."/>
            <person name="Hamlin N."/>
            <person name="Holroyd S."/>
            <person name="Hornsby T."/>
            <person name="Jagels K."/>
            <person name="Krogh A."/>
            <person name="McLean J."/>
            <person name="Moule S."/>
            <person name="Murphy L.D."/>
            <person name="Oliver S."/>
            <person name="Osborne J."/>
            <person name="Quail M.A."/>
            <person name="Rajandream M.A."/>
            <person name="Rogers J."/>
            <person name="Rutter S."/>
            <person name="Seeger K."/>
            <person name="Skelton S."/>
            <person name="Squares S."/>
            <person name="Squares R."/>
            <person name="Sulston J.E."/>
            <person name="Taylor K."/>
            <person name="Whitehead S."/>
            <person name="Barrell B.G."/>
        </authorList>
    </citation>
    <scope>NUCLEOTIDE SEQUENCE [LARGE SCALE GENOMIC DNA]</scope>
    <source>
        <strain>ATCC 25618 / H37Rv</strain>
    </source>
</reference>
<reference key="2">
    <citation type="journal article" date="2009" name="PLoS Genet.">
        <title>Comprehensive functional analysis of Mycobacterium tuberculosis toxin-antitoxin systems: implications for pathogenesis, stress responses, and evolution.</title>
        <authorList>
            <person name="Ramage H.R."/>
            <person name="Connolly L.E."/>
            <person name="Cox J.S."/>
        </authorList>
    </citation>
    <scope>POSSIBLE FUNCTION</scope>
    <source>
        <strain>ATCC 35801 / TMC 107 / Erdman</strain>
    </source>
</reference>
<reference key="3">
    <citation type="journal article" date="2011" name="Mol. Cell. Proteomics">
        <title>Proteogenomic analysis of Mycobacterium tuberculosis by high resolution mass spectrometry.</title>
        <authorList>
            <person name="Kelkar D.S."/>
            <person name="Kumar D."/>
            <person name="Kumar P."/>
            <person name="Balakrishnan L."/>
            <person name="Muthusamy B."/>
            <person name="Yadav A.K."/>
            <person name="Shrivastava P."/>
            <person name="Marimuthu A."/>
            <person name="Anand S."/>
            <person name="Sundaram H."/>
            <person name="Kingsbury R."/>
            <person name="Harsha H.C."/>
            <person name="Nair B."/>
            <person name="Prasad T.S."/>
            <person name="Chauhan D.S."/>
            <person name="Katoch K."/>
            <person name="Katoch V.M."/>
            <person name="Kumar P."/>
            <person name="Chaerkady R."/>
            <person name="Ramachandran S."/>
            <person name="Dash D."/>
            <person name="Pandey A."/>
        </authorList>
    </citation>
    <scope>IDENTIFICATION BY MASS SPECTROMETRY [LARGE SCALE ANALYSIS]</scope>
    <source>
        <strain>ATCC 25618 / H37Rv</strain>
    </source>
</reference>
<reference key="4">
    <citation type="journal article" date="2012" name="RNA">
        <title>Determination of ribonuclease sequence-specificity using Pentaprobes and mass spectrometry.</title>
        <authorList>
            <person name="McKenzie J.L."/>
            <person name="Duyvestyn J.M."/>
            <person name="Smith T."/>
            <person name="Bendak K."/>
            <person name="Mackay J."/>
            <person name="Cursons R."/>
            <person name="Cook G.M."/>
            <person name="Arcus V.L."/>
        </authorList>
    </citation>
    <scope>FUNCTION</scope>
    <scope>ACTIVITY REGULATION</scope>
    <scope>COFACTOR</scope>
</reference>
<dbReference type="EC" id="3.1.-.-" evidence="2"/>
<dbReference type="EMBL" id="AL123456">
    <property type="protein sequence ID" value="CCP43358.1"/>
    <property type="molecule type" value="Genomic_DNA"/>
</dbReference>
<dbReference type="PIR" id="D70911">
    <property type="entry name" value="D70911"/>
</dbReference>
<dbReference type="RefSeq" id="NP_215131.1">
    <property type="nucleotide sequence ID" value="NC_000962.3"/>
</dbReference>
<dbReference type="RefSeq" id="WP_003403218.1">
    <property type="nucleotide sequence ID" value="NZ_NVQJ01000033.1"/>
</dbReference>
<dbReference type="SMR" id="P9WF79"/>
<dbReference type="STRING" id="83332.Rv0617"/>
<dbReference type="PaxDb" id="83332-Rv0617"/>
<dbReference type="GeneID" id="45424579"/>
<dbReference type="GeneID" id="887926"/>
<dbReference type="KEGG" id="mtu:Rv0617"/>
<dbReference type="KEGG" id="mtv:RVBD_0617"/>
<dbReference type="TubercuList" id="Rv0617"/>
<dbReference type="eggNOG" id="COG1848">
    <property type="taxonomic scope" value="Bacteria"/>
</dbReference>
<dbReference type="InParanoid" id="P9WF79"/>
<dbReference type="OrthoDB" id="196567at2"/>
<dbReference type="PhylomeDB" id="P9WF79"/>
<dbReference type="Proteomes" id="UP000001584">
    <property type="component" value="Chromosome"/>
</dbReference>
<dbReference type="GO" id="GO:0000287">
    <property type="term" value="F:magnesium ion binding"/>
    <property type="evidence" value="ECO:0007669"/>
    <property type="project" value="UniProtKB-UniRule"/>
</dbReference>
<dbReference type="GO" id="GO:0004540">
    <property type="term" value="F:RNA nuclease activity"/>
    <property type="evidence" value="ECO:0007669"/>
    <property type="project" value="InterPro"/>
</dbReference>
<dbReference type="GO" id="GO:0045926">
    <property type="term" value="P:negative regulation of growth"/>
    <property type="evidence" value="ECO:0007669"/>
    <property type="project" value="UniProtKB-ARBA"/>
</dbReference>
<dbReference type="Gene3D" id="3.40.50.1010">
    <property type="entry name" value="5'-nuclease"/>
    <property type="match status" value="1"/>
</dbReference>
<dbReference type="HAMAP" id="MF_00265">
    <property type="entry name" value="VapC_Nob1"/>
    <property type="match status" value="1"/>
</dbReference>
<dbReference type="InterPro" id="IPR006226">
    <property type="entry name" value="Mtu_PIN"/>
</dbReference>
<dbReference type="InterPro" id="IPR029060">
    <property type="entry name" value="PIN-like_dom_sf"/>
</dbReference>
<dbReference type="InterPro" id="IPR002716">
    <property type="entry name" value="PIN_dom"/>
</dbReference>
<dbReference type="InterPro" id="IPR022907">
    <property type="entry name" value="VapC_family"/>
</dbReference>
<dbReference type="NCBIfam" id="TIGR00028">
    <property type="entry name" value="Mtu_PIN_fam"/>
    <property type="match status" value="1"/>
</dbReference>
<dbReference type="Pfam" id="PF01850">
    <property type="entry name" value="PIN"/>
    <property type="match status" value="1"/>
</dbReference>
<dbReference type="SUPFAM" id="SSF88723">
    <property type="entry name" value="PIN domain-like"/>
    <property type="match status" value="1"/>
</dbReference>
<feature type="chain" id="PRO_0000407887" description="Ribonuclease VapC29">
    <location>
        <begin position="1"/>
        <end position="133"/>
    </location>
</feature>
<feature type="domain" description="PINc" evidence="2">
    <location>
        <begin position="3"/>
        <end position="122"/>
    </location>
</feature>
<feature type="binding site" evidence="2">
    <location>
        <position position="6"/>
    </location>
    <ligand>
        <name>Mg(2+)</name>
        <dbReference type="ChEBI" id="CHEBI:18420"/>
    </ligand>
</feature>
<feature type="binding site" evidence="2">
    <location>
        <position position="97"/>
    </location>
    <ligand>
        <name>Mg(2+)</name>
        <dbReference type="ChEBI" id="CHEBI:18420"/>
    </ligand>
</feature>